<sequence length="84" mass="9740">MHGTCLSGLYPEPFTHNSHDYPHFNIYISFGGPKYCITALNTYVIPLLHHILTTQFIHTYFNIPTKSPPKSPKHKNYLSFNFTK</sequence>
<gene>
    <name type="ordered locus">YNR077C</name>
    <name type="ORF">N3830</name>
</gene>
<name>YN9D_YEAST</name>
<keyword id="KW-1185">Reference proteome</keyword>
<reference key="1">
    <citation type="journal article" date="1996" name="Yeast">
        <title>Sequencing of a 9.2 kb telomeric fragment from the right arm of Saccharomyces cerevisiae chromosome XIV.</title>
        <authorList>
            <person name="Levesque H."/>
            <person name="Lepingle A."/>
            <person name="Nicaud J.-M."/>
            <person name="Gaillardin C."/>
        </authorList>
    </citation>
    <scope>NUCLEOTIDE SEQUENCE [GENOMIC DNA]</scope>
    <source>
        <strain>ATCC 204508 / S288c</strain>
    </source>
</reference>
<reference key="2">
    <citation type="journal article" date="1997" name="Nature">
        <title>The nucleotide sequence of Saccharomyces cerevisiae chromosome XIV and its evolutionary implications.</title>
        <authorList>
            <person name="Philippsen P."/>
            <person name="Kleine K."/>
            <person name="Poehlmann R."/>
            <person name="Duesterhoeft A."/>
            <person name="Hamberg K."/>
            <person name="Hegemann J.H."/>
            <person name="Obermaier B."/>
            <person name="Urrestarazu L.A."/>
            <person name="Aert R."/>
            <person name="Albermann K."/>
            <person name="Altmann R."/>
            <person name="Andre B."/>
            <person name="Baladron V."/>
            <person name="Ballesta J.P.G."/>
            <person name="Becam A.-M."/>
            <person name="Beinhauer J.D."/>
            <person name="Boskovic J."/>
            <person name="Buitrago M.J."/>
            <person name="Bussereau F."/>
            <person name="Coster F."/>
            <person name="Crouzet M."/>
            <person name="D'Angelo M."/>
            <person name="Dal Pero F."/>
            <person name="De Antoni A."/>
            <person name="del Rey F."/>
            <person name="Doignon F."/>
            <person name="Domdey H."/>
            <person name="Dubois E."/>
            <person name="Fiedler T.A."/>
            <person name="Fleig U."/>
            <person name="Floeth M."/>
            <person name="Fritz C."/>
            <person name="Gaillardin C."/>
            <person name="Garcia-Cantalejo J.M."/>
            <person name="Glansdorff N."/>
            <person name="Goffeau A."/>
            <person name="Gueldener U."/>
            <person name="Herbert C.J."/>
            <person name="Heumann K."/>
            <person name="Heuss-Neitzel D."/>
            <person name="Hilbert H."/>
            <person name="Hinni K."/>
            <person name="Iraqui Houssaini I."/>
            <person name="Jacquet M."/>
            <person name="Jimenez A."/>
            <person name="Jonniaux J.-L."/>
            <person name="Karpfinger-Hartl L."/>
            <person name="Lanfranchi G."/>
            <person name="Lepingle A."/>
            <person name="Levesque H."/>
            <person name="Lyck R."/>
            <person name="Maftahi M."/>
            <person name="Mallet L."/>
            <person name="Maurer C.T.C."/>
            <person name="Messenguy F."/>
            <person name="Mewes H.-W."/>
            <person name="Moestl D."/>
            <person name="Nasr F."/>
            <person name="Nicaud J.-M."/>
            <person name="Niedenthal R.K."/>
            <person name="Pandolfo D."/>
            <person name="Pierard A."/>
            <person name="Piravandi E."/>
            <person name="Planta R.J."/>
            <person name="Pohl T.M."/>
            <person name="Purnelle B."/>
            <person name="Rebischung C."/>
            <person name="Remacha M.A."/>
            <person name="Revuelta J.L."/>
            <person name="Rinke M."/>
            <person name="Saiz J.E."/>
            <person name="Sartorello F."/>
            <person name="Scherens B."/>
            <person name="Sen-Gupta M."/>
            <person name="Soler-Mira A."/>
            <person name="Urbanus J.H.M."/>
            <person name="Valle G."/>
            <person name="Van Dyck L."/>
            <person name="Verhasselt P."/>
            <person name="Vierendeels F."/>
            <person name="Vissers S."/>
            <person name="Voet M."/>
            <person name="Volckaert G."/>
            <person name="Wach A."/>
            <person name="Wambutt R."/>
            <person name="Wedler H."/>
            <person name="Zollner A."/>
            <person name="Hani J."/>
        </authorList>
    </citation>
    <scope>NUCLEOTIDE SEQUENCE [LARGE SCALE GENOMIC DNA]</scope>
    <source>
        <strain>ATCC 204508 / S288c</strain>
    </source>
</reference>
<reference key="3">
    <citation type="journal article" date="2014" name="G3 (Bethesda)">
        <title>The reference genome sequence of Saccharomyces cerevisiae: Then and now.</title>
        <authorList>
            <person name="Engel S.R."/>
            <person name="Dietrich F.S."/>
            <person name="Fisk D.G."/>
            <person name="Binkley G."/>
            <person name="Balakrishnan R."/>
            <person name="Costanzo M.C."/>
            <person name="Dwight S.S."/>
            <person name="Hitz B.C."/>
            <person name="Karra K."/>
            <person name="Nash R.S."/>
            <person name="Weng S."/>
            <person name="Wong E.D."/>
            <person name="Lloyd P."/>
            <person name="Skrzypek M.S."/>
            <person name="Miyasato S.R."/>
            <person name="Simison M."/>
            <person name="Cherry J.M."/>
        </authorList>
    </citation>
    <scope>GENOME REANNOTATION</scope>
    <source>
        <strain>ATCC 204508 / S288c</strain>
    </source>
</reference>
<reference key="4">
    <citation type="journal article" date="2003" name="J. Proteome Res.">
        <title>Changes in the protein expression of yeast as a function of carbon source.</title>
        <authorList>
            <person name="Gao J."/>
            <person name="Opiteck G.J."/>
            <person name="Friedrichs M.S."/>
            <person name="Dongre A.R."/>
            <person name="Hefta S.A."/>
        </authorList>
    </citation>
    <scope>INDUCTION</scope>
</reference>
<dbReference type="EMBL" id="Z71692">
    <property type="protein sequence ID" value="CAA96361.1"/>
    <property type="molecule type" value="Genomic_DNA"/>
</dbReference>
<dbReference type="EMBL" id="BK006947">
    <property type="protein sequence ID" value="DAA35135.1"/>
    <property type="molecule type" value="Genomic_DNA"/>
</dbReference>
<dbReference type="PIR" id="S63410">
    <property type="entry name" value="S63410"/>
</dbReference>
<dbReference type="RefSeq" id="NP_001254791.1">
    <property type="nucleotide sequence ID" value="NM_001267862.1"/>
</dbReference>
<dbReference type="FunCoup" id="P53758">
    <property type="interactions" value="26"/>
</dbReference>
<dbReference type="STRING" id="4932.YNR077C"/>
<dbReference type="PaxDb" id="4932-YNR077C"/>
<dbReference type="EnsemblFungi" id="YNR077C_mRNA">
    <property type="protein sequence ID" value="YNR077C"/>
    <property type="gene ID" value="YNR077C"/>
</dbReference>
<dbReference type="GeneID" id="855814"/>
<dbReference type="KEGG" id="sce:YNR077C"/>
<dbReference type="AGR" id="SGD:S000005360"/>
<dbReference type="SGD" id="S000005360">
    <property type="gene designation" value="YNR077C"/>
</dbReference>
<dbReference type="VEuPathDB" id="FungiDB:YNR077C"/>
<dbReference type="GeneTree" id="ENSGT00940000177535"/>
<dbReference type="HOGENOM" id="CLU_164954_0_0_1"/>
<dbReference type="InParanoid" id="P53758"/>
<dbReference type="OrthoDB" id="42511at4893"/>
<dbReference type="BioCyc" id="YEAST:G3O-33381-MONOMER"/>
<dbReference type="PRO" id="PR:P53758"/>
<dbReference type="Proteomes" id="UP000002311">
    <property type="component" value="Chromosome XIV"/>
</dbReference>
<dbReference type="RNAct" id="P53758">
    <property type="molecule type" value="protein"/>
</dbReference>
<dbReference type="InterPro" id="IPR007414">
    <property type="entry name" value="DUF468"/>
</dbReference>
<dbReference type="Pfam" id="PF04318">
    <property type="entry name" value="DUF468"/>
    <property type="match status" value="1"/>
</dbReference>
<comment type="induction">
    <text evidence="1">Induced 4.5-fold when shifted from galactose to glucose medium (at protein level).</text>
</comment>
<comment type="similarity">
    <text evidence="2">Belongs to the UPF0320 family.</text>
</comment>
<organism>
    <name type="scientific">Saccharomyces cerevisiae (strain ATCC 204508 / S288c)</name>
    <name type="common">Baker's yeast</name>
    <dbReference type="NCBI Taxonomy" id="559292"/>
    <lineage>
        <taxon>Eukaryota</taxon>
        <taxon>Fungi</taxon>
        <taxon>Dikarya</taxon>
        <taxon>Ascomycota</taxon>
        <taxon>Saccharomycotina</taxon>
        <taxon>Saccharomycetes</taxon>
        <taxon>Saccharomycetales</taxon>
        <taxon>Saccharomycetaceae</taxon>
        <taxon>Saccharomyces</taxon>
    </lineage>
</organism>
<evidence type="ECO:0000269" key="1">
    <source>
    </source>
</evidence>
<evidence type="ECO:0000305" key="2"/>
<proteinExistence type="evidence at protein level"/>
<protein>
    <recommendedName>
        <fullName>UPF0320 protein YNR077C</fullName>
    </recommendedName>
</protein>
<feature type="chain" id="PRO_0000211378" description="UPF0320 protein YNR077C">
    <location>
        <begin position="1"/>
        <end position="84"/>
    </location>
</feature>
<accession>P53758</accession>
<accession>I2HB74</accession>